<keyword id="KW-0997">Cell inner membrane</keyword>
<keyword id="KW-1003">Cell membrane</keyword>
<keyword id="KW-0406">Ion transport</keyword>
<keyword id="KW-0472">Membrane</keyword>
<keyword id="KW-0915">Sodium</keyword>
<keyword id="KW-0739">Sodium transport</keyword>
<keyword id="KW-0769">Symport</keyword>
<keyword id="KW-0812">Transmembrane</keyword>
<keyword id="KW-1133">Transmembrane helix</keyword>
<keyword id="KW-0813">Transport</keyword>
<reference key="1">
    <citation type="journal article" date="2006" name="J. Bacteriol.">
        <title>Complete genome sequence of Yersinia pestis strains Antiqua and Nepal516: evidence of gene reduction in an emerging pathogen.</title>
        <authorList>
            <person name="Chain P.S.G."/>
            <person name="Hu P."/>
            <person name="Malfatti S.A."/>
            <person name="Radnedge L."/>
            <person name="Larimer F."/>
            <person name="Vergez L.M."/>
            <person name="Worsham P."/>
            <person name="Chu M.C."/>
            <person name="Andersen G.L."/>
        </authorList>
    </citation>
    <scope>NUCLEOTIDE SEQUENCE [LARGE SCALE GENOMIC DNA]</scope>
    <source>
        <strain>Nepal516</strain>
    </source>
</reference>
<reference key="2">
    <citation type="submission" date="2009-04" db="EMBL/GenBank/DDBJ databases">
        <title>Yersinia pestis Nepal516A whole genome shotgun sequencing project.</title>
        <authorList>
            <person name="Plunkett G. III"/>
            <person name="Anderson B.D."/>
            <person name="Baumler D.J."/>
            <person name="Burland V."/>
            <person name="Cabot E.L."/>
            <person name="Glasner J.D."/>
            <person name="Mau B."/>
            <person name="Neeno-Eckwall E."/>
            <person name="Perna N.T."/>
            <person name="Munk A.C."/>
            <person name="Tapia R."/>
            <person name="Green L.D."/>
            <person name="Rogers Y.C."/>
            <person name="Detter J.C."/>
            <person name="Bruce D.C."/>
            <person name="Brettin T.S."/>
        </authorList>
    </citation>
    <scope>NUCLEOTIDE SEQUENCE [LARGE SCALE GENOMIC DNA]</scope>
    <source>
        <strain>Nepal516</strain>
    </source>
</reference>
<feature type="chain" id="PRO_1000024345" description="Cation/acetate symporter ActP">
    <location>
        <begin position="1"/>
        <end position="551"/>
    </location>
</feature>
<feature type="transmembrane region" description="Helical" evidence="1">
    <location>
        <begin position="5"/>
        <end position="25"/>
    </location>
</feature>
<feature type="transmembrane region" description="Helical" evidence="1">
    <location>
        <begin position="34"/>
        <end position="54"/>
    </location>
</feature>
<feature type="transmembrane region" description="Helical" evidence="1">
    <location>
        <begin position="77"/>
        <end position="97"/>
    </location>
</feature>
<feature type="transmembrane region" description="Helical" evidence="1">
    <location>
        <begin position="104"/>
        <end position="124"/>
    </location>
</feature>
<feature type="transmembrane region" description="Helical" evidence="1">
    <location>
        <begin position="150"/>
        <end position="170"/>
    </location>
</feature>
<feature type="transmembrane region" description="Helical" evidence="1">
    <location>
        <begin position="184"/>
        <end position="204"/>
    </location>
</feature>
<feature type="transmembrane region" description="Helical" evidence="1">
    <location>
        <begin position="207"/>
        <end position="227"/>
    </location>
</feature>
<feature type="transmembrane region" description="Helical" evidence="1">
    <location>
        <begin position="263"/>
        <end position="283"/>
    </location>
</feature>
<feature type="transmembrane region" description="Helical" evidence="1">
    <location>
        <begin position="304"/>
        <end position="324"/>
    </location>
</feature>
<feature type="transmembrane region" description="Helical" evidence="1">
    <location>
        <begin position="356"/>
        <end position="376"/>
    </location>
</feature>
<feature type="transmembrane region" description="Helical" evidence="1">
    <location>
        <begin position="406"/>
        <end position="426"/>
    </location>
</feature>
<feature type="transmembrane region" description="Helical" evidence="1">
    <location>
        <begin position="430"/>
        <end position="450"/>
    </location>
</feature>
<feature type="transmembrane region" description="Helical" evidence="1">
    <location>
        <begin position="469"/>
        <end position="489"/>
    </location>
</feature>
<feature type="transmembrane region" description="Helical" evidence="1">
    <location>
        <begin position="498"/>
        <end position="518"/>
    </location>
</feature>
<proteinExistence type="inferred from homology"/>
<name>ACTP_YERPN</name>
<dbReference type="EMBL" id="CP000305">
    <property type="protein sequence ID" value="ABG19745.1"/>
    <property type="molecule type" value="Genomic_DNA"/>
</dbReference>
<dbReference type="EMBL" id="ACNQ01000017">
    <property type="protein sequence ID" value="EEO75940.1"/>
    <property type="molecule type" value="Genomic_DNA"/>
</dbReference>
<dbReference type="RefSeq" id="WP_002209029.1">
    <property type="nucleotide sequence ID" value="NZ_ACNQ01000017.1"/>
</dbReference>
<dbReference type="SMR" id="Q1CE35"/>
<dbReference type="GeneID" id="57974352"/>
<dbReference type="KEGG" id="ypn:YPN_3418"/>
<dbReference type="HOGENOM" id="CLU_018808_8_3_6"/>
<dbReference type="Proteomes" id="UP000008936">
    <property type="component" value="Chromosome"/>
</dbReference>
<dbReference type="GO" id="GO:0005886">
    <property type="term" value="C:plasma membrane"/>
    <property type="evidence" value="ECO:0007669"/>
    <property type="project" value="UniProtKB-SubCell"/>
</dbReference>
<dbReference type="GO" id="GO:0015123">
    <property type="term" value="F:acetate transmembrane transporter activity"/>
    <property type="evidence" value="ECO:0007669"/>
    <property type="project" value="UniProtKB-UniRule"/>
</dbReference>
<dbReference type="GO" id="GO:0043879">
    <property type="term" value="F:glycolate transmembrane transporter activity"/>
    <property type="evidence" value="ECO:0007669"/>
    <property type="project" value="InterPro"/>
</dbReference>
<dbReference type="GO" id="GO:0015293">
    <property type="term" value="F:symporter activity"/>
    <property type="evidence" value="ECO:0007669"/>
    <property type="project" value="UniProtKB-KW"/>
</dbReference>
<dbReference type="GO" id="GO:0006847">
    <property type="term" value="P:plasma membrane acetate transport"/>
    <property type="evidence" value="ECO:0007669"/>
    <property type="project" value="TreeGrafter"/>
</dbReference>
<dbReference type="GO" id="GO:0006814">
    <property type="term" value="P:sodium ion transport"/>
    <property type="evidence" value="ECO:0007669"/>
    <property type="project" value="UniProtKB-KW"/>
</dbReference>
<dbReference type="CDD" id="cd11480">
    <property type="entry name" value="SLC5sbd_u4"/>
    <property type="match status" value="1"/>
</dbReference>
<dbReference type="FunFam" id="1.20.1730.10:FF:000001">
    <property type="entry name" value="Cation/acetate symporter ActP"/>
    <property type="match status" value="1"/>
</dbReference>
<dbReference type="Gene3D" id="1.20.1730.10">
    <property type="entry name" value="Sodium/glucose cotransporter"/>
    <property type="match status" value="1"/>
</dbReference>
<dbReference type="HAMAP" id="MF_01426">
    <property type="entry name" value="Acet_symport_ActP"/>
    <property type="match status" value="1"/>
</dbReference>
<dbReference type="InterPro" id="IPR014083">
    <property type="entry name" value="Cation/Ac_symporter_ActP"/>
</dbReference>
<dbReference type="InterPro" id="IPR038377">
    <property type="entry name" value="Na/Glc_symporter_sf"/>
</dbReference>
<dbReference type="InterPro" id="IPR001734">
    <property type="entry name" value="Na/solute_symporter"/>
</dbReference>
<dbReference type="InterPro" id="IPR018212">
    <property type="entry name" value="Na/solute_symporter_CS"/>
</dbReference>
<dbReference type="InterPro" id="IPR050277">
    <property type="entry name" value="Sodium:Solute_Symporter"/>
</dbReference>
<dbReference type="NCBIfam" id="NF006903">
    <property type="entry name" value="PRK09395.1"/>
    <property type="match status" value="1"/>
</dbReference>
<dbReference type="NCBIfam" id="NF009135">
    <property type="entry name" value="PRK12488.1"/>
    <property type="match status" value="1"/>
</dbReference>
<dbReference type="NCBIfam" id="TIGR00813">
    <property type="entry name" value="sss"/>
    <property type="match status" value="1"/>
</dbReference>
<dbReference type="NCBIfam" id="TIGR02711">
    <property type="entry name" value="symport_actP"/>
    <property type="match status" value="1"/>
</dbReference>
<dbReference type="PANTHER" id="PTHR48086:SF6">
    <property type="entry name" value="CATION_ACETATE SYMPORTER ACTP"/>
    <property type="match status" value="1"/>
</dbReference>
<dbReference type="PANTHER" id="PTHR48086">
    <property type="entry name" value="SODIUM/PROLINE SYMPORTER-RELATED"/>
    <property type="match status" value="1"/>
</dbReference>
<dbReference type="Pfam" id="PF00474">
    <property type="entry name" value="SSF"/>
    <property type="match status" value="1"/>
</dbReference>
<dbReference type="PROSITE" id="PS00456">
    <property type="entry name" value="NA_SOLUT_SYMP_1"/>
    <property type="match status" value="1"/>
</dbReference>
<dbReference type="PROSITE" id="PS50283">
    <property type="entry name" value="NA_SOLUT_SYMP_3"/>
    <property type="match status" value="1"/>
</dbReference>
<organism>
    <name type="scientific">Yersinia pestis bv. Antiqua (strain Nepal516)</name>
    <dbReference type="NCBI Taxonomy" id="377628"/>
    <lineage>
        <taxon>Bacteria</taxon>
        <taxon>Pseudomonadati</taxon>
        <taxon>Pseudomonadota</taxon>
        <taxon>Gammaproteobacteria</taxon>
        <taxon>Enterobacterales</taxon>
        <taxon>Yersiniaceae</taxon>
        <taxon>Yersinia</taxon>
    </lineage>
</organism>
<sequence>MKIRHWSALSLFVLPALAQAEALTGEVHRQPLNIQAIVMFLLFVGGTLYITYWASKRTRSRQDYYTAGGRITGFQNGLAIAGDYMSAASFLGISALVYASGYDGLIYSIGFLIGWPIILFLIAERLRNLGRYTFADVASYRLQQRPIRTLSACGSLVVVALYLIAQMVGAGKLIQLLFGLNYHVAVVLVGILMVLYVLFGGMLATTWVQIIKAVMLLSGATFMAIMVMKSVNFNFNTLFSEAVKVHPKGLSIMSPGGLVSDPISALSLGLALMFGTAGLPHILMRFFTVSDAKEARKSVFYATGFIGYFYILTFIIGFGAILLVGPNQTFKDAAGALLGGNNMAAVHLANAVGGSFFLGFISAVAFATILAVVAGLTLAGASAVSHDLYASVIKKGKANERDELRVSKITVIILGIVAIGLGILFENQNIAFMVGLAFSIAASCNFPIIIISMYWDKLTTRGAMIGGWLGLSTAVILMILGPTIWVTILGHEKPIYPYEYPALFSMIAAFVGTWFFSITDNSETGKQERLLFKSQFVRSQTGLGASKGGAH</sequence>
<gene>
    <name evidence="1" type="primary">actP</name>
    <name type="ordered locus">YPN_3418</name>
    <name type="ORF">YP516_3883</name>
</gene>
<comment type="function">
    <text evidence="1">Transports acetate.</text>
</comment>
<comment type="subcellular location">
    <subcellularLocation>
        <location evidence="1">Cell inner membrane</location>
        <topology evidence="1">Multi-pass membrane protein</topology>
    </subcellularLocation>
</comment>
<comment type="similarity">
    <text evidence="1">Belongs to the sodium:solute symporter (SSF) (TC 2.A.21) family.</text>
</comment>
<accession>Q1CE35</accession>
<accession>C4GYE0</accession>
<protein>
    <recommendedName>
        <fullName evidence="1">Cation/acetate symporter ActP</fullName>
    </recommendedName>
    <alternativeName>
        <fullName evidence="1">Acetate permease</fullName>
    </alternativeName>
    <alternativeName>
        <fullName evidence="1">Acetate transporter ActP</fullName>
    </alternativeName>
</protein>
<evidence type="ECO:0000255" key="1">
    <source>
        <dbReference type="HAMAP-Rule" id="MF_01426"/>
    </source>
</evidence>